<accession>Q44840</accession>
<comment type="function">
    <text evidence="1">The phosphoenolpyruvate-dependent sugar phosphotransferase system (sugar PTS), a major carbohydrate active transport system, catalyzes the phosphorylation of incoming sugar substrates concomitantly with their translocation across the cell membrane. The enzyme II complex composed of PtsG and Crr is involved in glucose transport.</text>
</comment>
<comment type="cofactor">
    <cofactor evidence="1">
        <name>Zn(2+)</name>
        <dbReference type="ChEBI" id="CHEBI:29105"/>
    </cofactor>
    <text evidence="1">Binds 1 zinc ion per glycerol kinase EIIA-Glc dimer. The zinc ion is important for dimerization.</text>
</comment>
<comment type="subunit">
    <text evidence="1">Heterodimer with glycerol kinase (glpk).</text>
</comment>
<comment type="subcellular location">
    <subcellularLocation>
        <location evidence="3">Cytoplasm</location>
    </subcellularLocation>
</comment>
<comment type="domain">
    <text evidence="2">The EIIA domain is phosphorylated by phospho-HPr on a histidyl residue. Then, it transfers the phosphoryl group to the EIIB domain.</text>
</comment>
<organism>
    <name type="scientific">Borreliella burgdorferi (strain ATCC 35210 / DSM 4680 / CIP 102532 / B31)</name>
    <name type="common">Borrelia burgdorferi</name>
    <dbReference type="NCBI Taxonomy" id="224326"/>
    <lineage>
        <taxon>Bacteria</taxon>
        <taxon>Pseudomonadati</taxon>
        <taxon>Spirochaetota</taxon>
        <taxon>Spirochaetia</taxon>
        <taxon>Spirochaetales</taxon>
        <taxon>Borreliaceae</taxon>
        <taxon>Borreliella</taxon>
    </lineage>
</organism>
<sequence length="189" mass="20781">MGFLDFFKKTATLDLIAPISGKVMSIDKVPDEAFAEKIVGDGIAILPTSNELLAPCDGKIGKIFKTNHAFSLETKEGVEIFVHFGINTLNLNGKGFTRVAEEGINVKQGEVIIRLDLEYLKEHSESVITPVVIANSDEVSSIEYSFGRLENDSEYILSSSTVLTEEIRHKISQTKPVIAGKDLVLRVKK</sequence>
<proteinExistence type="inferred from homology"/>
<dbReference type="EMBL" id="U51878">
    <property type="protein sequence ID" value="AAA97468.1"/>
    <property type="molecule type" value="Genomic_DNA"/>
</dbReference>
<dbReference type="EMBL" id="AE000783">
    <property type="protein sequence ID" value="AAC66920.1"/>
    <property type="molecule type" value="Genomic_DNA"/>
</dbReference>
<dbReference type="PIR" id="F70169">
    <property type="entry name" value="F70169"/>
</dbReference>
<dbReference type="RefSeq" id="NP_212693.1">
    <property type="nucleotide sequence ID" value="NC_001318.1"/>
</dbReference>
<dbReference type="RefSeq" id="WP_002557147.1">
    <property type="nucleotide sequence ID" value="NC_001318.1"/>
</dbReference>
<dbReference type="SMR" id="Q44840"/>
<dbReference type="STRING" id="224326.BB_0559"/>
<dbReference type="PaxDb" id="224326-BB_0559"/>
<dbReference type="EnsemblBacteria" id="AAC66920">
    <property type="protein sequence ID" value="AAC66920"/>
    <property type="gene ID" value="BB_0559"/>
</dbReference>
<dbReference type="GeneID" id="56567991"/>
<dbReference type="KEGG" id="bbu:BB_0559"/>
<dbReference type="PATRIC" id="fig|224326.49.peg.950"/>
<dbReference type="HOGENOM" id="CLU_012312_5_3_12"/>
<dbReference type="OrthoDB" id="92465at2"/>
<dbReference type="Proteomes" id="UP000001807">
    <property type="component" value="Chromosome"/>
</dbReference>
<dbReference type="GO" id="GO:0005829">
    <property type="term" value="C:cytosol"/>
    <property type="evidence" value="ECO:0000314"/>
    <property type="project" value="CAFA"/>
</dbReference>
<dbReference type="GO" id="GO:0016301">
    <property type="term" value="F:kinase activity"/>
    <property type="evidence" value="ECO:0007669"/>
    <property type="project" value="UniProtKB-KW"/>
</dbReference>
<dbReference type="GO" id="GO:0046872">
    <property type="term" value="F:metal ion binding"/>
    <property type="evidence" value="ECO:0007669"/>
    <property type="project" value="UniProtKB-KW"/>
</dbReference>
<dbReference type="GO" id="GO:0009401">
    <property type="term" value="P:phosphoenolpyruvate-dependent sugar phosphotransferase system"/>
    <property type="evidence" value="ECO:0007669"/>
    <property type="project" value="UniProtKB-KW"/>
</dbReference>
<dbReference type="FunFam" id="2.70.70.10:FF:000001">
    <property type="entry name" value="PTS system glucose-specific IIA component"/>
    <property type="match status" value="1"/>
</dbReference>
<dbReference type="Gene3D" id="2.70.70.10">
    <property type="entry name" value="Glucose Permease (Domain IIA)"/>
    <property type="match status" value="1"/>
</dbReference>
<dbReference type="InterPro" id="IPR011055">
    <property type="entry name" value="Dup_hybrid_motif"/>
</dbReference>
<dbReference type="InterPro" id="IPR001127">
    <property type="entry name" value="PTS_EIIA_1_perm"/>
</dbReference>
<dbReference type="InterPro" id="IPR050890">
    <property type="entry name" value="PTS_EIIA_component"/>
</dbReference>
<dbReference type="NCBIfam" id="NF006962">
    <property type="entry name" value="PRK09439.1"/>
    <property type="match status" value="1"/>
</dbReference>
<dbReference type="NCBIfam" id="TIGR00830">
    <property type="entry name" value="PTBA"/>
    <property type="match status" value="1"/>
</dbReference>
<dbReference type="PANTHER" id="PTHR45008">
    <property type="entry name" value="PTS SYSTEM GLUCOSE-SPECIFIC EIIA COMPONENT"/>
    <property type="match status" value="1"/>
</dbReference>
<dbReference type="PANTHER" id="PTHR45008:SF1">
    <property type="entry name" value="PTS SYSTEM GLUCOSE-SPECIFIC EIIA COMPONENT"/>
    <property type="match status" value="1"/>
</dbReference>
<dbReference type="Pfam" id="PF00358">
    <property type="entry name" value="PTS_EIIA_1"/>
    <property type="match status" value="1"/>
</dbReference>
<dbReference type="SUPFAM" id="SSF51261">
    <property type="entry name" value="Duplicated hybrid motif"/>
    <property type="match status" value="1"/>
</dbReference>
<dbReference type="PROSITE" id="PS51093">
    <property type="entry name" value="PTS_EIIA_TYPE_1"/>
    <property type="match status" value="1"/>
</dbReference>
<dbReference type="PROSITE" id="PS00371">
    <property type="entry name" value="PTS_EIIA_TYPE_1_HIS"/>
    <property type="match status" value="1"/>
</dbReference>
<protein>
    <recommendedName>
        <fullName evidence="1">PTS system glucose-specific EIIA component</fullName>
    </recommendedName>
    <alternativeName>
        <fullName evidence="1">EIIA-Glc</fullName>
    </alternativeName>
    <alternativeName>
        <fullName evidence="1">EIII-Glc</fullName>
    </alternativeName>
    <alternativeName>
        <fullName evidence="1">Glucose-specific phosphotransferase enzyme IIA component</fullName>
    </alternativeName>
</protein>
<name>PTGA_BORBU</name>
<evidence type="ECO:0000250" key="1">
    <source>
        <dbReference type="UniProtKB" id="P69783"/>
    </source>
</evidence>
<evidence type="ECO:0000255" key="2">
    <source>
        <dbReference type="PROSITE-ProRule" id="PRU00416"/>
    </source>
</evidence>
<evidence type="ECO:0000305" key="3"/>
<reference key="1">
    <citation type="submission" date="1996-03" db="EMBL/GenBank/DDBJ databases">
        <authorList>
            <person name="Porcella S.F."/>
            <person name="Radolf J.D."/>
            <person name="Norgard M.V."/>
        </authorList>
    </citation>
    <scope>NUCLEOTIDE SEQUENCE [GENOMIC DNA]</scope>
    <source>
        <strain>ATCC 53899 / 297</strain>
    </source>
</reference>
<reference key="2">
    <citation type="journal article" date="1997" name="Nature">
        <title>Genomic sequence of a Lyme disease spirochaete, Borrelia burgdorferi.</title>
        <authorList>
            <person name="Fraser C.M."/>
            <person name="Casjens S."/>
            <person name="Huang W.M."/>
            <person name="Sutton G.G."/>
            <person name="Clayton R.A."/>
            <person name="Lathigra R."/>
            <person name="White O."/>
            <person name="Ketchum K.A."/>
            <person name="Dodson R.J."/>
            <person name="Hickey E.K."/>
            <person name="Gwinn M.L."/>
            <person name="Dougherty B.A."/>
            <person name="Tomb J.-F."/>
            <person name="Fleischmann R.D."/>
            <person name="Richardson D.L."/>
            <person name="Peterson J.D."/>
            <person name="Kerlavage A.R."/>
            <person name="Quackenbush J."/>
            <person name="Salzberg S.L."/>
            <person name="Hanson M."/>
            <person name="van Vugt R."/>
            <person name="Palmer N."/>
            <person name="Adams M.D."/>
            <person name="Gocayne J.D."/>
            <person name="Weidman J.F."/>
            <person name="Utterback T.R."/>
            <person name="Watthey L."/>
            <person name="McDonald L.A."/>
            <person name="Artiach P."/>
            <person name="Bowman C."/>
            <person name="Garland S.A."/>
            <person name="Fujii C."/>
            <person name="Cotton M.D."/>
            <person name="Horst K."/>
            <person name="Roberts K.M."/>
            <person name="Hatch B."/>
            <person name="Smith H.O."/>
            <person name="Venter J.C."/>
        </authorList>
    </citation>
    <scope>NUCLEOTIDE SEQUENCE [LARGE SCALE GENOMIC DNA]</scope>
    <source>
        <strain>ATCC 35210 / DSM 4680 / CIP 102532 / B31</strain>
    </source>
</reference>
<keyword id="KW-0963">Cytoplasm</keyword>
<keyword id="KW-0418">Kinase</keyword>
<keyword id="KW-0479">Metal-binding</keyword>
<keyword id="KW-0597">Phosphoprotein</keyword>
<keyword id="KW-0598">Phosphotransferase system</keyword>
<keyword id="KW-1185">Reference proteome</keyword>
<keyword id="KW-0762">Sugar transport</keyword>
<keyword id="KW-0808">Transferase</keyword>
<keyword id="KW-0813">Transport</keyword>
<keyword id="KW-0862">Zinc</keyword>
<feature type="chain" id="PRO_0000186537" description="PTS system glucose-specific EIIA component">
    <location>
        <begin position="1"/>
        <end position="189"/>
    </location>
</feature>
<feature type="domain" description="PTS EIIA type-1" evidence="2">
    <location>
        <begin position="31"/>
        <end position="135"/>
    </location>
</feature>
<feature type="active site" description="Tele-phosphohistidine intermediate; for EIIA activity" evidence="1 2">
    <location>
        <position position="83"/>
    </location>
</feature>
<feature type="binding site" evidence="1">
    <location>
        <position position="68"/>
    </location>
    <ligand>
        <name>Zn(2+)</name>
        <dbReference type="ChEBI" id="CHEBI:29105"/>
        <note>ligand shared with glycerol kinase</note>
    </ligand>
</feature>
<feature type="binding site" evidence="1">
    <location>
        <position position="83"/>
    </location>
    <ligand>
        <name>Zn(2+)</name>
        <dbReference type="ChEBI" id="CHEBI:29105"/>
        <note>ligand shared with glycerol kinase</note>
    </ligand>
</feature>
<feature type="site" description="Important for phospho-donor activity" evidence="1">
    <location>
        <position position="68"/>
    </location>
</feature>
<feature type="modified residue" description="Phosphohistidine; by HPr" evidence="1">
    <location>
        <position position="83"/>
    </location>
</feature>
<gene>
    <name type="primary">crr</name>
    <name type="ordered locus">BB_0559</name>
</gene>